<gene>
    <name type="primary">TOP2</name>
    <name type="ORF">PGUG_04026</name>
</gene>
<comment type="function">
    <text>Control of topological states of DNA by transient breakage and subsequent rejoining of DNA strands. Topoisomerase II makes double-strand breaks.</text>
</comment>
<comment type="catalytic activity">
    <reaction evidence="3">
        <text>ATP-dependent breakage, passage and rejoining of double-stranded DNA.</text>
        <dbReference type="EC" id="5.6.2.2"/>
    </reaction>
</comment>
<comment type="cofactor">
    <cofactor evidence="3">
        <name>Mg(2+)</name>
        <dbReference type="ChEBI" id="CHEBI:18420"/>
    </cofactor>
    <cofactor evidence="3">
        <name>Mn(2+)</name>
        <dbReference type="ChEBI" id="CHEBI:29035"/>
    </cofactor>
    <cofactor evidence="3">
        <name>Ca(2+)</name>
        <dbReference type="ChEBI" id="CHEBI:29108"/>
    </cofactor>
    <text evidence="3">Binds two Mg(2+) per subunit. The magnesium ions form salt bridges with both the protein and the DNA. Can also accept other divalent metal cations, such as Mn(2+) or Ca(2+).</text>
</comment>
<comment type="subunit">
    <text evidence="1">Homodimer.</text>
</comment>
<comment type="subcellular location">
    <subcellularLocation>
        <location>Nucleus</location>
    </subcellularLocation>
</comment>
<comment type="miscellaneous">
    <text>Eukaryotic topoisomerase I and II can relax both negative and positive supercoils, whereas prokaryotic enzymes relax only negative supercoils.</text>
</comment>
<comment type="similarity">
    <text evidence="6">Belongs to the type II topoisomerase family.</text>
</comment>
<comment type="sequence caution" evidence="6">
    <conflict type="erroneous termination">
        <sequence resource="EMBL-CDS" id="CAA99278"/>
    </conflict>
    <text>Extended C-terminus.</text>
</comment>
<comment type="sequence caution" evidence="6">
    <conflict type="erroneous translation">
        <sequence resource="EMBL-CDS" id="CAA99278"/>
    </conflict>
    <text>Wrong genetic code used for translating the sequence.</text>
</comment>
<keyword id="KW-0067">ATP-binding</keyword>
<keyword id="KW-0238">DNA-binding</keyword>
<keyword id="KW-0413">Isomerase</keyword>
<keyword id="KW-0460">Magnesium</keyword>
<keyword id="KW-0479">Metal-binding</keyword>
<keyword id="KW-0547">Nucleotide-binding</keyword>
<keyword id="KW-0539">Nucleus</keyword>
<keyword id="KW-0597">Phosphoprotein</keyword>
<keyword id="KW-1185">Reference proteome</keyword>
<keyword id="KW-0799">Topoisomerase</keyword>
<protein>
    <recommendedName>
        <fullName>DNA topoisomerase 2</fullName>
        <ecNumber evidence="3">5.6.2.2</ecNumber>
    </recommendedName>
    <alternativeName>
        <fullName>DNA topoisomerase II</fullName>
    </alternativeName>
</protein>
<proteinExistence type="inferred from homology"/>
<sequence length="1400" mass="158157">MSSFESDSASDAESAFSDASSDFTPSSSVKSKGKVPLRDSTNTTAQPSAPATGDASDQYQKLSQLEHILKRPDTYIGSVEKTGVEMWSFDAATESMIYKEVHIVPGLYKIFDEILVNAADNKIRDPSMRNIKVNIDAENNTISVMNDGKGIPIEIHKKEKIYIPELIFGNLLTSSNYDDDEKKVTGGRNGYGAKLCNIFSTEFVLETADLNTSQVYKQTWTNNMANLTKPKITKLKSKKEYTKVTFKPDLSKFHMEMLDDDILSVLRRRVYDLCGTVKDCNIYLNDKKLSIRNFKSYVEMYVNAIRERSPDPVAPEGETRNYSTIVHEVFNDRWEVAFAVSDGSFNQVSFVNSIATTSGGTHVKYVSDQIITKLIDALTKKEKGKKKLNIKPQEVRNNMFVFINCLIENPAFTSQTKEQLTTRVAQFGGKPSEKIVISDQFIAKILKTSIADKIRTIVNANEDKEMSKADGSRKSRIKNQVKLVDANKAGTKEGYKCTLILTEGDSAMPLAVAGLTVVGRDYYGCFPLRGKLLNVREASIEQVSKNAEINSIKQIMGLQHKKRYTPENIKSLRYGHIMIMTDQDQDGSHIKGLIINFLETSFPGLLEIPGFLLEFITPIVKVTITGRGNHRVIPFYNMPEFEKWRETEGTTCKWKHKYFKGLGTSLESEGREYFAALDRHMKSFHALQDGDSQYIDMAFSKKKADERKDWLQAFRPGTHLDPQIREIPISEFINKELILFSMADNVRSIPSILDGFKPGQRKVLYGCFKRNLRSEIKVAQLVGYISEHTGYHHGEGSLAQTIVGLAQNFVGANNLNLLQPIGLFGSRAAGGKDFSAVRYIHTNITDLTRVIFNPLDDDLYTYVQDDAQTVEPEAYLPIIPMLLVNGAEGIGTGWSTNIPSFNPVDIVANIRRMMNGEEPVDMTPWFKGWEGDLERISPEKYKVSGKIEQVDDDTVEITEIPIKTWTNSVKEFLLAGLGNDKPWIKDMEEQHGINIRFVVRLSKEEMDKSLRMGLLERFKLISSISLSNMVAFDPQGRIKKYSSANEILKDYYWARLELYQRRKDMMAENFQNQLTRLSEQARFIKLIIEKKLTIANKKRSEMVDDLKKLKFTRFNKNGKPVHDEPLVEAEELAEEEEEAAGDISQLNLGLVAPEDESQYKPETTYSQYDYLLGMAIWSLTRERYEKLLRQRDEKQEELNELLKKSAKDLWNSDLDDFLVGWEEFLRADIEARNSFGPTAKTSTRKRARKSTKSEPAQKKTKSSTPKASTPTIKAEATPAQPVVKEETNKQPDLLSFFSKEPSVAKTVSAAPPKRKTPKSKPKKEIVSLFSDSSDDDITSFSVGDAKPTPKPSTNNILDELEDLKSSTFTPKVGAAGRRRPKSYALAESDGNESDEDYMSE</sequence>
<feature type="chain" id="PRO_0000145385" description="DNA topoisomerase 2">
    <location>
        <begin position="1"/>
        <end position="1400"/>
    </location>
</feature>
<feature type="domain" description="Toprim" evidence="3">
    <location>
        <begin position="497"/>
        <end position="613"/>
    </location>
</feature>
<feature type="domain" description="Topo IIA-type catalytic" evidence="4">
    <location>
        <begin position="749"/>
        <end position="1214"/>
    </location>
</feature>
<feature type="region of interest" description="Disordered" evidence="5">
    <location>
        <begin position="1"/>
        <end position="57"/>
    </location>
</feature>
<feature type="region of interest" description="Interaction with DNA" evidence="2">
    <location>
        <begin position="379"/>
        <end position="386"/>
    </location>
</feature>
<feature type="region of interest" description="Interaction with DNA" evidence="2">
    <location>
        <begin position="1019"/>
        <end position="1028"/>
    </location>
</feature>
<feature type="region of interest" description="Disordered" evidence="5">
    <location>
        <begin position="1235"/>
        <end position="1400"/>
    </location>
</feature>
<feature type="compositionally biased region" description="Low complexity" evidence="5">
    <location>
        <begin position="1"/>
        <end position="30"/>
    </location>
</feature>
<feature type="compositionally biased region" description="Polar residues" evidence="5">
    <location>
        <begin position="39"/>
        <end position="57"/>
    </location>
</feature>
<feature type="compositionally biased region" description="Low complexity" evidence="5">
    <location>
        <begin position="1262"/>
        <end position="1271"/>
    </location>
</feature>
<feature type="compositionally biased region" description="Basic residues" evidence="5">
    <location>
        <begin position="1312"/>
        <end position="1321"/>
    </location>
</feature>
<feature type="compositionally biased region" description="Acidic residues" evidence="5">
    <location>
        <begin position="1389"/>
        <end position="1400"/>
    </location>
</feature>
<feature type="active site" description="O-(5'-phospho-DNA)-tyrosine intermediate" evidence="4">
    <location>
        <position position="839"/>
    </location>
</feature>
<feature type="binding site" evidence="2">
    <location>
        <position position="117"/>
    </location>
    <ligand>
        <name>ATP</name>
        <dbReference type="ChEBI" id="CHEBI:30616"/>
    </ligand>
</feature>
<feature type="binding site" evidence="2">
    <location>
        <position position="146"/>
    </location>
    <ligand>
        <name>ATP</name>
        <dbReference type="ChEBI" id="CHEBI:30616"/>
    </ligand>
</feature>
<feature type="binding site" evidence="2">
    <location>
        <begin position="174"/>
        <end position="176"/>
    </location>
    <ligand>
        <name>ATP</name>
        <dbReference type="ChEBI" id="CHEBI:30616"/>
    </ligand>
</feature>
<feature type="binding site" evidence="2">
    <location>
        <begin position="187"/>
        <end position="194"/>
    </location>
    <ligand>
        <name>ATP</name>
        <dbReference type="ChEBI" id="CHEBI:30616"/>
    </ligand>
</feature>
<feature type="binding site" evidence="2">
    <location>
        <begin position="415"/>
        <end position="417"/>
    </location>
    <ligand>
        <name>ATP</name>
        <dbReference type="ChEBI" id="CHEBI:30616"/>
    </ligand>
</feature>
<feature type="binding site" evidence="3">
    <location>
        <position position="503"/>
    </location>
    <ligand>
        <name>Mg(2+)</name>
        <dbReference type="ChEBI" id="CHEBI:18420"/>
        <label>1</label>
        <note>catalytic</note>
    </ligand>
</feature>
<feature type="binding site" evidence="3">
    <location>
        <position position="582"/>
    </location>
    <ligand>
        <name>Mg(2+)</name>
        <dbReference type="ChEBI" id="CHEBI:18420"/>
        <label>1</label>
        <note>catalytic</note>
    </ligand>
</feature>
<feature type="binding site" evidence="3">
    <location>
        <position position="582"/>
    </location>
    <ligand>
        <name>Mg(2+)</name>
        <dbReference type="ChEBI" id="CHEBI:18420"/>
        <label>2</label>
    </ligand>
</feature>
<feature type="binding site" evidence="3">
    <location>
        <position position="584"/>
    </location>
    <ligand>
        <name>Mg(2+)</name>
        <dbReference type="ChEBI" id="CHEBI:18420"/>
        <label>2</label>
    </ligand>
</feature>
<feature type="site" description="Interaction with DNA" evidence="3">
    <location>
        <position position="531"/>
    </location>
</feature>
<feature type="site" description="Interaction with DNA" evidence="3">
    <location>
        <position position="534"/>
    </location>
</feature>
<feature type="site" description="Interaction with DNA" evidence="3">
    <location>
        <position position="707"/>
    </location>
</feature>
<feature type="site" description="Interaction with DNA" evidence="3">
    <location>
        <position position="708"/>
    </location>
</feature>
<feature type="site" description="Interaction with DNA" evidence="3">
    <location>
        <position position="757"/>
    </location>
</feature>
<feature type="site" description="Interaction with DNA" evidence="3">
    <location>
        <position position="791"/>
    </location>
</feature>
<feature type="site" description="Interaction with DNA" evidence="3">
    <location>
        <position position="797"/>
    </location>
</feature>
<feature type="site" description="Transition state stabilizer" evidence="1">
    <location>
        <position position="838"/>
    </location>
</feature>
<feature type="site" description="Important for DNA bending; intercalates between base pairs of target DNA" evidence="1">
    <location>
        <position position="890"/>
    </location>
</feature>
<feature type="site" description="Interaction with DNA" evidence="3">
    <location>
        <position position="965"/>
    </location>
</feature>
<feature type="sequence conflict" description="In Ref. 3; CAA99278." evidence="6" ref="3">
    <original>L</original>
    <variation>F</variation>
    <location>
        <position position="1293"/>
    </location>
</feature>
<feature type="sequence conflict" description="In Ref. 3; CAA99278." evidence="6" ref="3">
    <original>I</original>
    <variation>V</variation>
    <location>
        <position position="1325"/>
    </location>
</feature>
<dbReference type="EC" id="5.6.2.2" evidence="3"/>
<dbReference type="EMBL" id="CH408159">
    <property type="protein sequence ID" value="EDK39928.2"/>
    <property type="molecule type" value="Genomic_DNA"/>
</dbReference>
<dbReference type="EMBL" id="AB049145">
    <property type="protein sequence ID" value="BAB13754.2"/>
    <property type="molecule type" value="Genomic_DNA"/>
</dbReference>
<dbReference type="EMBL" id="Z74991">
    <property type="protein sequence ID" value="CAA99278.1"/>
    <property type="status" value="ALT_SEQ"/>
    <property type="molecule type" value="Genomic_DNA"/>
</dbReference>
<dbReference type="RefSeq" id="XP_001483297.1">
    <property type="nucleotide sequence ID" value="XM_001483247.1"/>
</dbReference>
<dbReference type="SMR" id="Q01879"/>
<dbReference type="FunCoup" id="Q01879">
    <property type="interactions" value="1175"/>
</dbReference>
<dbReference type="STRING" id="294746.Q01879"/>
<dbReference type="GeneID" id="5125173"/>
<dbReference type="KEGG" id="pgu:PGUG_04026"/>
<dbReference type="VEuPathDB" id="FungiDB:PGUG_04026"/>
<dbReference type="eggNOG" id="KOG0355">
    <property type="taxonomic scope" value="Eukaryota"/>
</dbReference>
<dbReference type="HOGENOM" id="CLU_001935_1_0_1"/>
<dbReference type="InParanoid" id="Q01879"/>
<dbReference type="OMA" id="DVKPHMI"/>
<dbReference type="OrthoDB" id="276498at2759"/>
<dbReference type="Proteomes" id="UP000001997">
    <property type="component" value="Unassembled WGS sequence"/>
</dbReference>
<dbReference type="GO" id="GO:0097047">
    <property type="term" value="C:DNA replication termination region"/>
    <property type="evidence" value="ECO:0007669"/>
    <property type="project" value="EnsemblFungi"/>
</dbReference>
<dbReference type="GO" id="GO:0000795">
    <property type="term" value="C:synaptonemal complex"/>
    <property type="evidence" value="ECO:0007669"/>
    <property type="project" value="EnsemblFungi"/>
</dbReference>
<dbReference type="GO" id="GO:0005524">
    <property type="term" value="F:ATP binding"/>
    <property type="evidence" value="ECO:0007669"/>
    <property type="project" value="UniProtKB-KW"/>
</dbReference>
<dbReference type="GO" id="GO:0003677">
    <property type="term" value="F:DNA binding"/>
    <property type="evidence" value="ECO:0007669"/>
    <property type="project" value="UniProtKB-KW"/>
</dbReference>
<dbReference type="GO" id="GO:0003918">
    <property type="term" value="F:DNA topoisomerase type II (double strand cut, ATP-hydrolyzing) activity"/>
    <property type="evidence" value="ECO:0007669"/>
    <property type="project" value="UniProtKB-EC"/>
</dbReference>
<dbReference type="GO" id="GO:0042802">
    <property type="term" value="F:identical protein binding"/>
    <property type="evidence" value="ECO:0007669"/>
    <property type="project" value="EnsemblFungi"/>
</dbReference>
<dbReference type="GO" id="GO:0046872">
    <property type="term" value="F:metal ion binding"/>
    <property type="evidence" value="ECO:0007669"/>
    <property type="project" value="UniProtKB-KW"/>
</dbReference>
<dbReference type="GO" id="GO:0031055">
    <property type="term" value="P:chromatin remodeling at centromere"/>
    <property type="evidence" value="ECO:0007669"/>
    <property type="project" value="EnsemblFungi"/>
</dbReference>
<dbReference type="GO" id="GO:0006271">
    <property type="term" value="P:DNA strand elongation involved in DNA replication"/>
    <property type="evidence" value="ECO:0007669"/>
    <property type="project" value="EnsemblFungi"/>
</dbReference>
<dbReference type="GO" id="GO:0006265">
    <property type="term" value="P:DNA topological change"/>
    <property type="evidence" value="ECO:0007669"/>
    <property type="project" value="EnsemblFungi"/>
</dbReference>
<dbReference type="GO" id="GO:0000019">
    <property type="term" value="P:regulation of mitotic recombination"/>
    <property type="evidence" value="ECO:0007669"/>
    <property type="project" value="EnsemblFungi"/>
</dbReference>
<dbReference type="GO" id="GO:0097046">
    <property type="term" value="P:replication fork progression beyond termination site"/>
    <property type="evidence" value="ECO:0007669"/>
    <property type="project" value="EnsemblFungi"/>
</dbReference>
<dbReference type="GO" id="GO:0000712">
    <property type="term" value="P:resolution of meiotic recombination intermediates"/>
    <property type="evidence" value="ECO:0007669"/>
    <property type="project" value="TreeGrafter"/>
</dbReference>
<dbReference type="GO" id="GO:0009303">
    <property type="term" value="P:rRNA transcription"/>
    <property type="evidence" value="ECO:0007669"/>
    <property type="project" value="EnsemblFungi"/>
</dbReference>
<dbReference type="GO" id="GO:0000819">
    <property type="term" value="P:sister chromatid segregation"/>
    <property type="evidence" value="ECO:0007669"/>
    <property type="project" value="TreeGrafter"/>
</dbReference>
<dbReference type="GO" id="GO:0000722">
    <property type="term" value="P:telomere maintenance via recombination"/>
    <property type="evidence" value="ECO:0007669"/>
    <property type="project" value="EnsemblFungi"/>
</dbReference>
<dbReference type="CDD" id="cd16930">
    <property type="entry name" value="HATPase_TopII-like"/>
    <property type="match status" value="1"/>
</dbReference>
<dbReference type="CDD" id="cd00187">
    <property type="entry name" value="TOP4c"/>
    <property type="match status" value="1"/>
</dbReference>
<dbReference type="CDD" id="cd03481">
    <property type="entry name" value="TopoIIA_Trans_ScTopoIIA"/>
    <property type="match status" value="1"/>
</dbReference>
<dbReference type="CDD" id="cd03365">
    <property type="entry name" value="TOPRIM_TopoIIA"/>
    <property type="match status" value="1"/>
</dbReference>
<dbReference type="FunFam" id="3.30.1490.30:FF:000001">
    <property type="entry name" value="DNA topoisomerase 2"/>
    <property type="match status" value="1"/>
</dbReference>
<dbReference type="FunFam" id="3.30.230.10:FF:000008">
    <property type="entry name" value="DNA topoisomerase 2"/>
    <property type="match status" value="1"/>
</dbReference>
<dbReference type="FunFam" id="3.30.565.10:FF:000004">
    <property type="entry name" value="DNA topoisomerase 2"/>
    <property type="match status" value="1"/>
</dbReference>
<dbReference type="FunFam" id="3.40.50.670:FF:000001">
    <property type="entry name" value="DNA topoisomerase 2"/>
    <property type="match status" value="2"/>
</dbReference>
<dbReference type="FunFam" id="3.90.199.10:FF:000002">
    <property type="entry name" value="DNA topoisomerase 2"/>
    <property type="match status" value="1"/>
</dbReference>
<dbReference type="Gene3D" id="3.30.1360.40">
    <property type="match status" value="1"/>
</dbReference>
<dbReference type="Gene3D" id="3.30.1490.30">
    <property type="match status" value="1"/>
</dbReference>
<dbReference type="Gene3D" id="3.30.230.10">
    <property type="match status" value="1"/>
</dbReference>
<dbReference type="Gene3D" id="3.40.50.670">
    <property type="match status" value="1"/>
</dbReference>
<dbReference type="Gene3D" id="3.30.565.10">
    <property type="entry name" value="Histidine kinase-like ATPase, C-terminal domain"/>
    <property type="match status" value="1"/>
</dbReference>
<dbReference type="Gene3D" id="3.90.199.10">
    <property type="entry name" value="Topoisomerase II, domain 5"/>
    <property type="match status" value="1"/>
</dbReference>
<dbReference type="Gene3D" id="1.10.268.10">
    <property type="entry name" value="Topoisomerase, domain 3"/>
    <property type="match status" value="1"/>
</dbReference>
<dbReference type="InterPro" id="IPR050634">
    <property type="entry name" value="DNA_Topoisomerase_II"/>
</dbReference>
<dbReference type="InterPro" id="IPR036890">
    <property type="entry name" value="HATPase_C_sf"/>
</dbReference>
<dbReference type="InterPro" id="IPR020568">
    <property type="entry name" value="Ribosomal_Su5_D2-typ_SF"/>
</dbReference>
<dbReference type="InterPro" id="IPR014721">
    <property type="entry name" value="Ribsml_uS5_D2-typ_fold_subgr"/>
</dbReference>
<dbReference type="InterPro" id="IPR001241">
    <property type="entry name" value="Topo_IIA"/>
</dbReference>
<dbReference type="InterPro" id="IPR013760">
    <property type="entry name" value="Topo_IIA-like_dom_sf"/>
</dbReference>
<dbReference type="InterPro" id="IPR013758">
    <property type="entry name" value="Topo_IIA_A/C_ab"/>
</dbReference>
<dbReference type="InterPro" id="IPR013757">
    <property type="entry name" value="Topo_IIA_A_a_sf"/>
</dbReference>
<dbReference type="InterPro" id="IPR013759">
    <property type="entry name" value="Topo_IIA_B_C"/>
</dbReference>
<dbReference type="InterPro" id="IPR013506">
    <property type="entry name" value="Topo_IIA_bsu_dom2"/>
</dbReference>
<dbReference type="InterPro" id="IPR002205">
    <property type="entry name" value="Topo_IIA_dom_A"/>
</dbReference>
<dbReference type="InterPro" id="IPR001154">
    <property type="entry name" value="TopoII_euk"/>
</dbReference>
<dbReference type="InterPro" id="IPR031660">
    <property type="entry name" value="TOPRIM_C"/>
</dbReference>
<dbReference type="InterPro" id="IPR006171">
    <property type="entry name" value="TOPRIM_dom"/>
</dbReference>
<dbReference type="InterPro" id="IPR034157">
    <property type="entry name" value="TOPRIM_TopoII"/>
</dbReference>
<dbReference type="PANTHER" id="PTHR10169:SF38">
    <property type="entry name" value="DNA TOPOISOMERASE 2"/>
    <property type="match status" value="1"/>
</dbReference>
<dbReference type="PANTHER" id="PTHR10169">
    <property type="entry name" value="DNA TOPOISOMERASE/GYRASE"/>
    <property type="match status" value="1"/>
</dbReference>
<dbReference type="Pfam" id="PF00204">
    <property type="entry name" value="DNA_gyraseB"/>
    <property type="match status" value="1"/>
</dbReference>
<dbReference type="Pfam" id="PF00521">
    <property type="entry name" value="DNA_topoisoIV"/>
    <property type="match status" value="1"/>
</dbReference>
<dbReference type="Pfam" id="PF02518">
    <property type="entry name" value="HATPase_c"/>
    <property type="match status" value="1"/>
</dbReference>
<dbReference type="Pfam" id="PF01751">
    <property type="entry name" value="Toprim"/>
    <property type="match status" value="1"/>
</dbReference>
<dbReference type="Pfam" id="PF16898">
    <property type="entry name" value="TOPRIM_C"/>
    <property type="match status" value="1"/>
</dbReference>
<dbReference type="PRINTS" id="PR01158">
    <property type="entry name" value="TOPISMRASEII"/>
</dbReference>
<dbReference type="PRINTS" id="PR00418">
    <property type="entry name" value="TPI2FAMILY"/>
</dbReference>
<dbReference type="SMART" id="SM00387">
    <property type="entry name" value="HATPase_c"/>
    <property type="match status" value="1"/>
</dbReference>
<dbReference type="SMART" id="SM00433">
    <property type="entry name" value="TOP2c"/>
    <property type="match status" value="1"/>
</dbReference>
<dbReference type="SMART" id="SM00434">
    <property type="entry name" value="TOP4c"/>
    <property type="match status" value="1"/>
</dbReference>
<dbReference type="SUPFAM" id="SSF55874">
    <property type="entry name" value="ATPase domain of HSP90 chaperone/DNA topoisomerase II/histidine kinase"/>
    <property type="match status" value="1"/>
</dbReference>
<dbReference type="SUPFAM" id="SSF54211">
    <property type="entry name" value="Ribosomal protein S5 domain 2-like"/>
    <property type="match status" value="1"/>
</dbReference>
<dbReference type="SUPFAM" id="SSF56719">
    <property type="entry name" value="Type II DNA topoisomerase"/>
    <property type="match status" value="1"/>
</dbReference>
<dbReference type="PROSITE" id="PS52040">
    <property type="entry name" value="TOPO_IIA"/>
    <property type="match status" value="1"/>
</dbReference>
<dbReference type="PROSITE" id="PS50880">
    <property type="entry name" value="TOPRIM"/>
    <property type="match status" value="1"/>
</dbReference>
<organism>
    <name type="scientific">Meyerozyma guilliermondii (strain ATCC 6260 / CBS 566 / DSM 6381 / JCM 1539 / NBRC 10279 / NRRL Y-324)</name>
    <name type="common">Yeast</name>
    <name type="synonym">Candida guilliermondii</name>
    <dbReference type="NCBI Taxonomy" id="294746"/>
    <lineage>
        <taxon>Eukaryota</taxon>
        <taxon>Fungi</taxon>
        <taxon>Dikarya</taxon>
        <taxon>Ascomycota</taxon>
        <taxon>Saccharomycotina</taxon>
        <taxon>Pichiomycetes</taxon>
        <taxon>Debaryomycetaceae</taxon>
        <taxon>Meyerozyma</taxon>
    </lineage>
</organism>
<reference key="1">
    <citation type="journal article" date="2009" name="Nature">
        <title>Evolution of pathogenicity and sexual reproduction in eight Candida genomes.</title>
        <authorList>
            <person name="Butler G."/>
            <person name="Rasmussen M.D."/>
            <person name="Lin M.F."/>
            <person name="Santos M.A.S."/>
            <person name="Sakthikumar S."/>
            <person name="Munro C.A."/>
            <person name="Rheinbay E."/>
            <person name="Grabherr M."/>
            <person name="Forche A."/>
            <person name="Reedy J.L."/>
            <person name="Agrafioti I."/>
            <person name="Arnaud M.B."/>
            <person name="Bates S."/>
            <person name="Brown A.J.P."/>
            <person name="Brunke S."/>
            <person name="Costanzo M.C."/>
            <person name="Fitzpatrick D.A."/>
            <person name="de Groot P.W.J."/>
            <person name="Harris D."/>
            <person name="Hoyer L.L."/>
            <person name="Hube B."/>
            <person name="Klis F.M."/>
            <person name="Kodira C."/>
            <person name="Lennard N."/>
            <person name="Logue M.E."/>
            <person name="Martin R."/>
            <person name="Neiman A.M."/>
            <person name="Nikolaou E."/>
            <person name="Quail M.A."/>
            <person name="Quinn J."/>
            <person name="Santos M.C."/>
            <person name="Schmitzberger F.F."/>
            <person name="Sherlock G."/>
            <person name="Shah P."/>
            <person name="Silverstein K.A.T."/>
            <person name="Skrzypek M.S."/>
            <person name="Soll D."/>
            <person name="Staggs R."/>
            <person name="Stansfield I."/>
            <person name="Stumpf M.P.H."/>
            <person name="Sudbery P.E."/>
            <person name="Srikantha T."/>
            <person name="Zeng Q."/>
            <person name="Berman J."/>
            <person name="Berriman M."/>
            <person name="Heitman J."/>
            <person name="Gow N.A.R."/>
            <person name="Lorenz M.C."/>
            <person name="Birren B.W."/>
            <person name="Kellis M."/>
            <person name="Cuomo C.A."/>
        </authorList>
    </citation>
    <scope>NUCLEOTIDE SEQUENCE [LARGE SCALE GENOMIC DNA]</scope>
    <source>
        <strain>ATCC 6260 / CBS 566 / DSM 6381 / JCM 1539 / NBRC 10279 / NRRL Y-324</strain>
    </source>
</reference>
<reference key="2">
    <citation type="journal article" date="2001" name="Gene">
        <title>Phylogenetic relationship and mode of evolution of yeast DNA topoisomerase II gene in the pathogenic Candida species.</title>
        <authorList>
            <person name="Kato M."/>
            <person name="Ozeki M."/>
            <person name="Kikuchi A."/>
            <person name="Kanbe T."/>
        </authorList>
    </citation>
    <scope>NUCLEOTIDE SEQUENCE [GENOMIC DNA] OF 93-874</scope>
    <source>
        <strain>ATCC 6260 / CBS 566 / DSM 6381 / JCM 1539 / NBRC 10279 / NRRL Y-324</strain>
        <strain>NUM249</strain>
        <strain>NUM4</strain>
        <strain>NUM43</strain>
    </source>
</reference>
<reference key="3">
    <citation type="submission" date="1996-07" db="EMBL/GenBank/DDBJ databases">
        <authorList>
            <person name="Boretsky Y.R."/>
            <person name="Liauta-Teglivets O.Y."/>
            <person name="Hasslacher M."/>
            <person name="Voronovsky A."/>
            <person name="Kohlwein S.D."/>
            <person name="Shavlovsky G.M."/>
        </authorList>
    </citation>
    <scope>NUCLEOTIDE SEQUENCE [GENOMIC DNA] OF 1042-1400</scope>
    <source>
        <strain>L2</strain>
    </source>
</reference>
<accession>Q01879</accession>
<accession>A5DL75</accession>
<accession>Q9HGH1</accession>
<evidence type="ECO:0000250" key="1"/>
<evidence type="ECO:0000250" key="2">
    <source>
        <dbReference type="UniProtKB" id="P06786"/>
    </source>
</evidence>
<evidence type="ECO:0000255" key="3">
    <source>
        <dbReference type="PROSITE-ProRule" id="PRU00995"/>
    </source>
</evidence>
<evidence type="ECO:0000255" key="4">
    <source>
        <dbReference type="PROSITE-ProRule" id="PRU01384"/>
    </source>
</evidence>
<evidence type="ECO:0000256" key="5">
    <source>
        <dbReference type="SAM" id="MobiDB-lite"/>
    </source>
</evidence>
<evidence type="ECO:0000305" key="6"/>
<name>TOP2_PICGU</name>